<keyword id="KW-0025">Alternative splicing</keyword>
<keyword id="KW-0090">Biological rhythms</keyword>
<keyword id="KW-0156">Chromatin regulator</keyword>
<keyword id="KW-0158">Chromosome</keyword>
<keyword id="KW-0963">Cytoplasm</keyword>
<keyword id="KW-0378">Hydrolase</keyword>
<keyword id="KW-0479">Metal-binding</keyword>
<keyword id="KW-0539">Nucleus</keyword>
<keyword id="KW-0597">Phosphoprotein</keyword>
<keyword id="KW-1185">Reference proteome</keyword>
<keyword id="KW-0678">Repressor</keyword>
<keyword id="KW-0804">Transcription</keyword>
<keyword id="KW-0805">Transcription regulation</keyword>
<keyword id="KW-0832">Ubl conjugation</keyword>
<keyword id="KW-0862">Zinc</keyword>
<protein>
    <recommendedName>
        <fullName evidence="21">Histone deacetylase 3</fullName>
        <shortName>HD3</shortName>
        <ecNumber evidence="22 23">3.5.1.98</ecNumber>
    </recommendedName>
    <alternativeName>
        <fullName>Protein deacetylase HDAC3</fullName>
        <ecNumber evidence="1">3.5.1.-</ecNumber>
    </alternativeName>
    <alternativeName>
        <fullName>Protein deacylase HDAC3</fullName>
        <ecNumber evidence="18">3.5.1.-</ecNumber>
    </alternativeName>
</protein>
<reference key="1">
    <citation type="journal article" date="1999" name="Biochem. Biophys. Res. Commun.">
        <title>Cloning and characterization of the murine histone deacetylase (HDAC3).</title>
        <authorList>
            <person name="Mahlknecht U."/>
            <person name="Hoelzer D."/>
            <person name="Bucala R."/>
            <person name="Verdin E."/>
        </authorList>
    </citation>
    <scope>NUCLEOTIDE SEQUENCE [MRNA] (ISOFORMS LONG AND SHORT)</scope>
    <scope>NUCLEOTIDE SEQUENCE [GENOMIC DNA] (ISOFORM LONG)</scope>
    <source>
        <strain>C3H/HeJ</strain>
        <strain>C57BL/6J</strain>
    </source>
</reference>
<reference key="2">
    <citation type="journal article" date="2005" name="Science">
        <title>The transcriptional landscape of the mammalian genome.</title>
        <authorList>
            <person name="Carninci P."/>
            <person name="Kasukawa T."/>
            <person name="Katayama S."/>
            <person name="Gough J."/>
            <person name="Frith M.C."/>
            <person name="Maeda N."/>
            <person name="Oyama R."/>
            <person name="Ravasi T."/>
            <person name="Lenhard B."/>
            <person name="Wells C."/>
            <person name="Kodzius R."/>
            <person name="Shimokawa K."/>
            <person name="Bajic V.B."/>
            <person name="Brenner S.E."/>
            <person name="Batalov S."/>
            <person name="Forrest A.R."/>
            <person name="Zavolan M."/>
            <person name="Davis M.J."/>
            <person name="Wilming L.G."/>
            <person name="Aidinis V."/>
            <person name="Allen J.E."/>
            <person name="Ambesi-Impiombato A."/>
            <person name="Apweiler R."/>
            <person name="Aturaliya R.N."/>
            <person name="Bailey T.L."/>
            <person name="Bansal M."/>
            <person name="Baxter L."/>
            <person name="Beisel K.W."/>
            <person name="Bersano T."/>
            <person name="Bono H."/>
            <person name="Chalk A.M."/>
            <person name="Chiu K.P."/>
            <person name="Choudhary V."/>
            <person name="Christoffels A."/>
            <person name="Clutterbuck D.R."/>
            <person name="Crowe M.L."/>
            <person name="Dalla E."/>
            <person name="Dalrymple B.P."/>
            <person name="de Bono B."/>
            <person name="Della Gatta G."/>
            <person name="di Bernardo D."/>
            <person name="Down T."/>
            <person name="Engstrom P."/>
            <person name="Fagiolini M."/>
            <person name="Faulkner G."/>
            <person name="Fletcher C.F."/>
            <person name="Fukushima T."/>
            <person name="Furuno M."/>
            <person name="Futaki S."/>
            <person name="Gariboldi M."/>
            <person name="Georgii-Hemming P."/>
            <person name="Gingeras T.R."/>
            <person name="Gojobori T."/>
            <person name="Green R.E."/>
            <person name="Gustincich S."/>
            <person name="Harbers M."/>
            <person name="Hayashi Y."/>
            <person name="Hensch T.K."/>
            <person name="Hirokawa N."/>
            <person name="Hill D."/>
            <person name="Huminiecki L."/>
            <person name="Iacono M."/>
            <person name="Ikeo K."/>
            <person name="Iwama A."/>
            <person name="Ishikawa T."/>
            <person name="Jakt M."/>
            <person name="Kanapin A."/>
            <person name="Katoh M."/>
            <person name="Kawasawa Y."/>
            <person name="Kelso J."/>
            <person name="Kitamura H."/>
            <person name="Kitano H."/>
            <person name="Kollias G."/>
            <person name="Krishnan S.P."/>
            <person name="Kruger A."/>
            <person name="Kummerfeld S.K."/>
            <person name="Kurochkin I.V."/>
            <person name="Lareau L.F."/>
            <person name="Lazarevic D."/>
            <person name="Lipovich L."/>
            <person name="Liu J."/>
            <person name="Liuni S."/>
            <person name="McWilliam S."/>
            <person name="Madan Babu M."/>
            <person name="Madera M."/>
            <person name="Marchionni L."/>
            <person name="Matsuda H."/>
            <person name="Matsuzawa S."/>
            <person name="Miki H."/>
            <person name="Mignone F."/>
            <person name="Miyake S."/>
            <person name="Morris K."/>
            <person name="Mottagui-Tabar S."/>
            <person name="Mulder N."/>
            <person name="Nakano N."/>
            <person name="Nakauchi H."/>
            <person name="Ng P."/>
            <person name="Nilsson R."/>
            <person name="Nishiguchi S."/>
            <person name="Nishikawa S."/>
            <person name="Nori F."/>
            <person name="Ohara O."/>
            <person name="Okazaki Y."/>
            <person name="Orlando V."/>
            <person name="Pang K.C."/>
            <person name="Pavan W.J."/>
            <person name="Pavesi G."/>
            <person name="Pesole G."/>
            <person name="Petrovsky N."/>
            <person name="Piazza S."/>
            <person name="Reed J."/>
            <person name="Reid J.F."/>
            <person name="Ring B.Z."/>
            <person name="Ringwald M."/>
            <person name="Rost B."/>
            <person name="Ruan Y."/>
            <person name="Salzberg S.L."/>
            <person name="Sandelin A."/>
            <person name="Schneider C."/>
            <person name="Schoenbach C."/>
            <person name="Sekiguchi K."/>
            <person name="Semple C.A."/>
            <person name="Seno S."/>
            <person name="Sessa L."/>
            <person name="Sheng Y."/>
            <person name="Shibata Y."/>
            <person name="Shimada H."/>
            <person name="Shimada K."/>
            <person name="Silva D."/>
            <person name="Sinclair B."/>
            <person name="Sperling S."/>
            <person name="Stupka E."/>
            <person name="Sugiura K."/>
            <person name="Sultana R."/>
            <person name="Takenaka Y."/>
            <person name="Taki K."/>
            <person name="Tammoja K."/>
            <person name="Tan S.L."/>
            <person name="Tang S."/>
            <person name="Taylor M.S."/>
            <person name="Tegner J."/>
            <person name="Teichmann S.A."/>
            <person name="Ueda H.R."/>
            <person name="van Nimwegen E."/>
            <person name="Verardo R."/>
            <person name="Wei C.L."/>
            <person name="Yagi K."/>
            <person name="Yamanishi H."/>
            <person name="Zabarovsky E."/>
            <person name="Zhu S."/>
            <person name="Zimmer A."/>
            <person name="Hide W."/>
            <person name="Bult C."/>
            <person name="Grimmond S.M."/>
            <person name="Teasdale R.D."/>
            <person name="Liu E.T."/>
            <person name="Brusic V."/>
            <person name="Quackenbush J."/>
            <person name="Wahlestedt C."/>
            <person name="Mattick J.S."/>
            <person name="Hume D.A."/>
            <person name="Kai C."/>
            <person name="Sasaki D."/>
            <person name="Tomaru Y."/>
            <person name="Fukuda S."/>
            <person name="Kanamori-Katayama M."/>
            <person name="Suzuki M."/>
            <person name="Aoki J."/>
            <person name="Arakawa T."/>
            <person name="Iida J."/>
            <person name="Imamura K."/>
            <person name="Itoh M."/>
            <person name="Kato T."/>
            <person name="Kawaji H."/>
            <person name="Kawagashira N."/>
            <person name="Kawashima T."/>
            <person name="Kojima M."/>
            <person name="Kondo S."/>
            <person name="Konno H."/>
            <person name="Nakano K."/>
            <person name="Ninomiya N."/>
            <person name="Nishio T."/>
            <person name="Okada M."/>
            <person name="Plessy C."/>
            <person name="Shibata K."/>
            <person name="Shiraki T."/>
            <person name="Suzuki S."/>
            <person name="Tagami M."/>
            <person name="Waki K."/>
            <person name="Watahiki A."/>
            <person name="Okamura-Oho Y."/>
            <person name="Suzuki H."/>
            <person name="Kawai J."/>
            <person name="Hayashizaki Y."/>
        </authorList>
    </citation>
    <scope>NUCLEOTIDE SEQUENCE [LARGE SCALE MRNA]</scope>
    <source>
        <tissue>Mammary gland</tissue>
    </source>
</reference>
<reference key="3">
    <citation type="journal article" date="2009" name="PLoS Biol.">
        <title>Lineage-specific biology revealed by a finished genome assembly of the mouse.</title>
        <authorList>
            <person name="Church D.M."/>
            <person name="Goodstadt L."/>
            <person name="Hillier L.W."/>
            <person name="Zody M.C."/>
            <person name="Goldstein S."/>
            <person name="She X."/>
            <person name="Bult C.J."/>
            <person name="Agarwala R."/>
            <person name="Cherry J.L."/>
            <person name="DiCuccio M."/>
            <person name="Hlavina W."/>
            <person name="Kapustin Y."/>
            <person name="Meric P."/>
            <person name="Maglott D."/>
            <person name="Birtle Z."/>
            <person name="Marques A.C."/>
            <person name="Graves T."/>
            <person name="Zhou S."/>
            <person name="Teague B."/>
            <person name="Potamousis K."/>
            <person name="Churas C."/>
            <person name="Place M."/>
            <person name="Herschleb J."/>
            <person name="Runnheim R."/>
            <person name="Forrest D."/>
            <person name="Amos-Landgraf J."/>
            <person name="Schwartz D.C."/>
            <person name="Cheng Z."/>
            <person name="Lindblad-Toh K."/>
            <person name="Eichler E.E."/>
            <person name="Ponting C.P."/>
        </authorList>
    </citation>
    <scope>NUCLEOTIDE SEQUENCE [LARGE SCALE GENOMIC DNA]</scope>
    <source>
        <strain>C57BL/6J</strain>
    </source>
</reference>
<reference key="4">
    <citation type="journal article" date="2004" name="Genome Res.">
        <title>The status, quality, and expansion of the NIH full-length cDNA project: the Mammalian Gene Collection (MGC).</title>
        <authorList>
            <consortium name="The MGC Project Team"/>
        </authorList>
    </citation>
    <scope>NUCLEOTIDE SEQUENCE [LARGE SCALE MRNA]</scope>
    <source>
        <tissue>Brain</tissue>
    </source>
</reference>
<reference key="5">
    <citation type="journal article" date="2000" name="Proc. Natl. Acad. Sci. U.S.A.">
        <title>Identification of a nuclear domain with deacetylase activity.</title>
        <authorList>
            <person name="Downes M."/>
            <person name="Ordentlich P."/>
            <person name="Kao H.-Y."/>
            <person name="Alvarez J.G.A."/>
            <person name="Evans R.M."/>
        </authorList>
    </citation>
    <scope>INTERACTION WITH HDAC7</scope>
</reference>
<reference key="6">
    <citation type="journal article" date="2001" name="J. Biol. Chem.">
        <title>Association of COOH-terminal-binding protein (CtBP) and MEF2-interacting transcription repressor (MITR) contributes to transcriptional repression of the MEF2 transcription factor.</title>
        <authorList>
            <person name="Zhang C.L."/>
            <person name="McKinsey T.A."/>
            <person name="Lu J.R."/>
            <person name="Olson E.N."/>
        </authorList>
    </citation>
    <scope>INTERACTION WITH HDAC9</scope>
</reference>
<reference key="7">
    <citation type="journal article" date="2001" name="Mol. Cell. Biol.">
        <title>ETO, a target of t(8;21) in acute leukemia, makes distinct contacts with multiple histone deacetylases and binds mSin3A through its oligomerization domain.</title>
        <authorList>
            <person name="Amann J.M."/>
            <person name="Nip J."/>
            <person name="Strom D.K."/>
            <person name="Lutterbach B."/>
            <person name="Harada H."/>
            <person name="Lenny N."/>
            <person name="Downing J.R."/>
            <person name="Meyers S."/>
            <person name="Hiebert S.W."/>
        </authorList>
    </citation>
    <scope>INTERACTION WITH CBFA2T3</scope>
</reference>
<reference key="8">
    <citation type="journal article" date="2002" name="Science">
        <title>Tissue-specific regulation of retinal and pituitary precursor cell proliferation.</title>
        <authorList>
            <person name="Li X."/>
            <person name="Perissi V."/>
            <person name="Liu F."/>
            <person name="Rose D.W."/>
            <person name="Rosenfeld M.G."/>
        </authorList>
    </citation>
    <scope>INTERACTION WITH DACH1</scope>
</reference>
<reference key="9">
    <citation type="journal article" date="2005" name="Nat. Neurosci.">
        <title>Histone deacetylase 9 couples neuronal activity to muscle chromatin acetylation and gene expression.</title>
        <authorList>
            <person name="Mejat A."/>
            <person name="Ramond F."/>
            <person name="Bassel-Duby R."/>
            <person name="Khochbin S."/>
            <person name="Olson E.N."/>
            <person name="Schaeffer L."/>
        </authorList>
    </citation>
    <scope>INTERACTION WITH HDAC9</scope>
</reference>
<reference key="10">
    <citation type="journal article" date="2005" name="Nucleic Acids Res.">
        <title>Kruppel-like zinc finger protein Gli-similar 2 (Glis2) represses transcription through interaction with C-terminal binding protein 1 (CtBP1).</title>
        <authorList>
            <person name="Kim S.-C."/>
            <person name="Kim Y.-S."/>
            <person name="Jetten A.M."/>
        </authorList>
    </citation>
    <scope>INTERACTION WITH GLIS2</scope>
</reference>
<reference key="11">
    <citation type="journal article" date="2006" name="Mol. Cell. Biol.">
        <title>PRISM/PRDM6, a transcriptional repressor that promotes the proliferative gene program in smooth muscle cells.</title>
        <authorList>
            <person name="Davis C.A."/>
            <person name="Haberland M."/>
            <person name="Arnold M.A."/>
            <person name="Sutherland L.B."/>
            <person name="McDonald O.G."/>
            <person name="Richardson J.A."/>
            <person name="Childs G."/>
            <person name="Harris S."/>
            <person name="Owens G.K."/>
            <person name="Olson E.N."/>
        </authorList>
    </citation>
    <scope>INTERACTION WITH PRDM6</scope>
</reference>
<reference key="12">
    <citation type="journal article" date="2008" name="Nature">
        <title>Nuclear receptor corepressor and histone deacetylase 3 govern circadian metabolic physiology.</title>
        <authorList>
            <person name="Alenghat T."/>
            <person name="Meyers K."/>
            <person name="Mullican S.E."/>
            <person name="Leitner K."/>
            <person name="Adeniji-Adele A."/>
            <person name="Avila J."/>
            <person name="Bucan M."/>
            <person name="Ahima R.S."/>
            <person name="Kaestner K.H."/>
            <person name="Lazar M.A."/>
        </authorList>
    </citation>
    <scope>FUNCTION</scope>
    <scope>INTERACTION WITH NCOR1</scope>
</reference>
<reference key="13">
    <citation type="journal article" date="2009" name="PLoS ONE">
        <title>HDAC3 as a molecular chaperone for shuttling phosphorylated TR2 to PML: a novel deacetylase activity-independent function of HDAC3.</title>
        <authorList>
            <person name="Gupta P."/>
            <person name="Ho P.C."/>
            <person name="Ha S.G."/>
            <person name="Lin Y.W."/>
            <person name="Wei L.N."/>
        </authorList>
    </citation>
    <scope>FUNCTION</scope>
    <scope>SUMOYLATION</scope>
    <scope>INTERACTION WITH NR2C1</scope>
    <scope>SUBCELLULAR LOCATION</scope>
</reference>
<reference key="14">
    <citation type="journal article" date="2010" name="Cell">
        <title>A tissue-specific atlas of mouse protein phosphorylation and expression.</title>
        <authorList>
            <person name="Huttlin E.L."/>
            <person name="Jedrychowski M.P."/>
            <person name="Elias J.E."/>
            <person name="Goswami T."/>
            <person name="Rad R."/>
            <person name="Beausoleil S.A."/>
            <person name="Villen J."/>
            <person name="Haas W."/>
            <person name="Sowa M.E."/>
            <person name="Gygi S.P."/>
        </authorList>
    </citation>
    <scope>IDENTIFICATION BY MASS SPECTROMETRY [LARGE SCALE ANALYSIS]</scope>
    <source>
        <tissue>Spleen</tissue>
    </source>
</reference>
<reference key="15">
    <citation type="journal article" date="2010" name="J. Biol. Chem.">
        <title>Zmynd15 encodes a histone deacetylase-dependent transcriptional repressor essential for spermiogenesis and male fertility.</title>
        <authorList>
            <person name="Yan W."/>
            <person name="Si Y."/>
            <person name="Slaymaker S."/>
            <person name="Li J."/>
            <person name="Zheng H."/>
            <person name="Young D.L."/>
            <person name="Aslanian A."/>
            <person name="Saunders L."/>
            <person name="Verdin E."/>
            <person name="Charo I.F."/>
        </authorList>
    </citation>
    <scope>INTERACTION WITH ZMYND15</scope>
</reference>
<reference key="16">
    <citation type="journal article" date="2013" name="Cell Rep.">
        <title>A hybrid mechanism of action for BCL6 in B cells defined by formation of functionally distinct complexes at enhancers and promoters.</title>
        <authorList>
            <person name="Hatzi K."/>
            <person name="Jiang Y."/>
            <person name="Huang C."/>
            <person name="Garrett-Bakelman F."/>
            <person name="Gearhart M.D."/>
            <person name="Giannopoulou E.G."/>
            <person name="Zumbo P."/>
            <person name="Kirouac K."/>
            <person name="Bhaskara S."/>
            <person name="Polo J.M."/>
            <person name="Kormaksson M."/>
            <person name="Mackerell A.D. Jr."/>
            <person name="Xue F."/>
            <person name="Mason C.E."/>
            <person name="Hiebert S.W."/>
            <person name="Prive G.G."/>
            <person name="Cerchietti L."/>
            <person name="Bardwell V.J."/>
            <person name="Elemento O."/>
            <person name="Melnick A."/>
        </authorList>
    </citation>
    <scope>FUNCTION IN DEACETYLATION OF H3K27</scope>
    <scope>CATALYTIC ACTIVITY</scope>
</reference>
<reference key="17">
    <citation type="journal article" date="2015" name="PLoS ONE">
        <title>A novel transcriptional factor Nkapl is a germ cell-specific suppressor of Notch signaling and is indispensable for spermatogenesis.</title>
        <authorList>
            <person name="Okuda H."/>
            <person name="Kiuchi H."/>
            <person name="Takao T."/>
            <person name="Miyagawa Y."/>
            <person name="Tsujimura A."/>
            <person name="Nonomura N."/>
            <person name="Miyata H."/>
            <person name="Okabe M."/>
            <person name="Ikawa M."/>
            <person name="Kawakami Y."/>
            <person name="Goshima N."/>
            <person name="Wada M."/>
            <person name="Tanaka H."/>
        </authorList>
    </citation>
    <scope>INTERACTION WITH NKAPL</scope>
</reference>
<reference key="18">
    <citation type="journal article" date="2016" name="Cell Rep.">
        <title>Distinct roles of HDAC3 in the core circadian negative feedback loop are critical for clock function.</title>
        <authorList>
            <person name="Shi G."/>
            <person name="Xie P."/>
            <person name="Qu Z."/>
            <person name="Zhang Z."/>
            <person name="Dong Z."/>
            <person name="An Y."/>
            <person name="Xing L."/>
            <person name="Liu Z."/>
            <person name="Dong Y."/>
            <person name="Xu G."/>
            <person name="Yang L."/>
            <person name="Liu Y."/>
            <person name="Xu Y."/>
        </authorList>
    </citation>
    <scope>FUNCTION</scope>
    <scope>DISRUPTION PHENOTYPE</scope>
    <scope>SUBCELLULAR LOCATION</scope>
    <scope>INTERACTION WITH FBXL3; BMAL1 AND CRY1</scope>
    <scope>MUTAGENESIS OF 134-HIS--ALA-136 AND SER-424</scope>
</reference>
<reference key="19">
    <citation type="journal article" date="2018" name="Nat. Neurosci.">
        <title>Haploinsufficiency of the intellectual disability gene SETD5 disturbs developmental gene expression and cognition.</title>
        <authorList>
            <person name="Deliu E."/>
            <person name="Arecco N."/>
            <person name="Morandell J."/>
            <person name="Dotter C.P."/>
            <person name="Contreras X."/>
            <person name="Girardot C."/>
            <person name="Kaesper E.L."/>
            <person name="Kozlova A."/>
            <person name="Kishi K."/>
            <person name="Chiaradia I."/>
            <person name="Noh K.M."/>
            <person name="Novarino G."/>
        </authorList>
    </citation>
    <scope>INTERACTION WITH SETD5</scope>
</reference>
<reference key="20">
    <citation type="journal article" date="2018" name="Sci. Rep.">
        <title>Histone deacetylase (HDAC) 1 and 2 complexes regulate both histone acetylation and crotonylation in vivo.</title>
        <authorList>
            <person name="Kelly R.D.W."/>
            <person name="Chandru A."/>
            <person name="Watson P.J."/>
            <person name="Song Y."/>
            <person name="Blades M."/>
            <person name="Robertson N.S."/>
            <person name="Jamieson A.G."/>
            <person name="Schwabe J.W.R."/>
            <person name="Cowley S.M."/>
        </authorList>
    </citation>
    <scope>FUNCTION</scope>
    <scope>CATALYTIC ACTIVITY</scope>
</reference>
<proteinExistence type="evidence at protein level"/>
<accession>O88895</accession>
<accession>O88896</accession>
<accession>Q3UM33</accession>
<feature type="chain" id="PRO_0000114697" description="Histone deacetylase 3">
    <location>
        <begin position="1"/>
        <end position="428"/>
    </location>
</feature>
<feature type="region of interest" description="Histone deacetylase">
    <location>
        <begin position="3"/>
        <end position="316"/>
    </location>
</feature>
<feature type="region of interest" description="Disordered" evidence="4">
    <location>
        <begin position="388"/>
        <end position="428"/>
    </location>
</feature>
<feature type="compositionally biased region" description="Basic and acidic residues" evidence="4">
    <location>
        <begin position="388"/>
        <end position="405"/>
    </location>
</feature>
<feature type="compositionally biased region" description="Basic and acidic residues" evidence="4">
    <location>
        <begin position="415"/>
        <end position="428"/>
    </location>
</feature>
<feature type="active site" evidence="2">
    <location>
        <position position="135"/>
    </location>
</feature>
<feature type="binding site" evidence="1">
    <location>
        <position position="17"/>
    </location>
    <ligand>
        <name>1D-myo-inositol 1,4,5,6-tetrakisphosphate</name>
        <dbReference type="ChEBI" id="CHEBI:57627"/>
    </ligand>
</feature>
<feature type="binding site" evidence="1">
    <location>
        <position position="21"/>
    </location>
    <ligand>
        <name>1D-myo-inositol 1,4,5,6-tetrakisphosphate</name>
        <dbReference type="ChEBI" id="CHEBI:57627"/>
    </ligand>
</feature>
<feature type="binding site" evidence="1">
    <location>
        <position position="25"/>
    </location>
    <ligand>
        <name>1D-myo-inositol 1,4,5,6-tetrakisphosphate</name>
        <dbReference type="ChEBI" id="CHEBI:57627"/>
    </ligand>
</feature>
<feature type="binding site" evidence="1">
    <location>
        <position position="170"/>
    </location>
    <ligand>
        <name>Zn(2+)</name>
        <dbReference type="ChEBI" id="CHEBI:29105"/>
    </ligand>
</feature>
<feature type="binding site" evidence="1">
    <location>
        <position position="172"/>
    </location>
    <ligand>
        <name>Zn(2+)</name>
        <dbReference type="ChEBI" id="CHEBI:29105"/>
    </ligand>
</feature>
<feature type="binding site" evidence="1">
    <location>
        <position position="259"/>
    </location>
    <ligand>
        <name>Zn(2+)</name>
        <dbReference type="ChEBI" id="CHEBI:29105"/>
    </ligand>
</feature>
<feature type="binding site" evidence="1">
    <location>
        <position position="265"/>
    </location>
    <ligand>
        <name>1D-myo-inositol 1,4,5,6-tetrakisphosphate</name>
        <dbReference type="ChEBI" id="CHEBI:57627"/>
    </ligand>
</feature>
<feature type="modified residue" description="Phosphoserine" evidence="1">
    <location>
        <position position="424"/>
    </location>
</feature>
<feature type="splice variant" id="VSP_002080" description="In isoform Short." evidence="20">
    <location>
        <begin position="69"/>
        <end position="259"/>
    </location>
</feature>
<feature type="mutagenesis site" description="Deacetylase-dead mutant. No effect on its interaction with BMAL1, CRY1 and FBXL3 or its ability to regulate the circadian clock." evidence="17">
    <original>HHA</original>
    <variation>QAS</variation>
    <location>
        <begin position="134"/>
        <end position="136"/>
    </location>
</feature>
<feature type="mutagenesis site" description="Deacetylase-dead mutant. No effect on its interaction with BMAL1, CRY1 and FBXL3 or its ability to regulate the circadian clock." evidence="17">
    <original>S</original>
    <variation>A</variation>
    <location>
        <position position="424"/>
    </location>
</feature>
<gene>
    <name evidence="20 24" type="primary">Hdac3</name>
</gene>
<dbReference type="EC" id="3.5.1.98" evidence="22 23"/>
<dbReference type="EC" id="3.5.1.-" evidence="1 18"/>
<dbReference type="EMBL" id="AF074881">
    <property type="protein sequence ID" value="AAC36305.1"/>
    <property type="status" value="ALT_SEQ"/>
    <property type="molecule type" value="mRNA"/>
</dbReference>
<dbReference type="EMBL" id="AF074882">
    <property type="protein sequence ID" value="AAC36306.1"/>
    <property type="status" value="ALT_SEQ"/>
    <property type="molecule type" value="mRNA"/>
</dbReference>
<dbReference type="EMBL" id="AF079310">
    <property type="protein sequence ID" value="AAC67258.1"/>
    <property type="status" value="ALT_SEQ"/>
    <property type="molecule type" value="Genomic_DNA"/>
</dbReference>
<dbReference type="EMBL" id="AF079309">
    <property type="protein sequence ID" value="AAC67258.1"/>
    <property type="status" value="JOINED"/>
    <property type="molecule type" value="Genomic_DNA"/>
</dbReference>
<dbReference type="EMBL" id="AK145158">
    <property type="protein sequence ID" value="BAE26265.1"/>
    <property type="molecule type" value="mRNA"/>
</dbReference>
<dbReference type="EMBL" id="AC129315">
    <property type="status" value="NOT_ANNOTATED_CDS"/>
    <property type="molecule type" value="Genomic_DNA"/>
</dbReference>
<dbReference type="EMBL" id="BC139300">
    <property type="protein sequence ID" value="AAI39301.1"/>
    <property type="molecule type" value="mRNA"/>
</dbReference>
<dbReference type="EMBL" id="BC139301">
    <property type="protein sequence ID" value="AAI39302.1"/>
    <property type="molecule type" value="mRNA"/>
</dbReference>
<dbReference type="CCDS" id="CCDS37785.1">
    <molecule id="O88895-1"/>
</dbReference>
<dbReference type="PIR" id="JC7102">
    <property type="entry name" value="JC7102"/>
</dbReference>
<dbReference type="RefSeq" id="NP_034541.2">
    <molecule id="O88895-1"/>
    <property type="nucleotide sequence ID" value="NM_010411.2"/>
</dbReference>
<dbReference type="SMR" id="O88895"/>
<dbReference type="CORUM" id="O88895"/>
<dbReference type="DIP" id="DIP-32547N"/>
<dbReference type="FunCoup" id="O88895">
    <property type="interactions" value="2200"/>
</dbReference>
<dbReference type="IntAct" id="O88895">
    <property type="interactions" value="25"/>
</dbReference>
<dbReference type="MINT" id="O88895"/>
<dbReference type="STRING" id="10090.ENSMUSP00000037981"/>
<dbReference type="BindingDB" id="O88895"/>
<dbReference type="ChEMBL" id="CHEMBL5142"/>
<dbReference type="iPTMnet" id="O88895"/>
<dbReference type="PhosphoSitePlus" id="O88895"/>
<dbReference type="PaxDb" id="10090-ENSMUSP00000037981"/>
<dbReference type="PeptideAtlas" id="O88895"/>
<dbReference type="ProteomicsDB" id="269819">
    <molecule id="O88895-1"/>
</dbReference>
<dbReference type="ProteomicsDB" id="269820">
    <molecule id="O88895-2"/>
</dbReference>
<dbReference type="ProteomicsDB" id="334754"/>
<dbReference type="Pumba" id="O88895"/>
<dbReference type="Antibodypedia" id="3568">
    <property type="antibodies" value="996 antibodies from 48 providers"/>
</dbReference>
<dbReference type="DNASU" id="15183"/>
<dbReference type="Ensembl" id="ENSMUST00000043498.9">
    <molecule id="O88895-1"/>
    <property type="protein sequence ID" value="ENSMUSP00000037981.8"/>
    <property type="gene ID" value="ENSMUSG00000024454.17"/>
</dbReference>
<dbReference type="GeneID" id="15183"/>
<dbReference type="KEGG" id="mmu:15183"/>
<dbReference type="UCSC" id="uc008erl.1">
    <property type="organism name" value="mouse"/>
</dbReference>
<dbReference type="AGR" id="MGI:1343091"/>
<dbReference type="CTD" id="8841"/>
<dbReference type="MGI" id="MGI:1343091">
    <property type="gene designation" value="Hdac3"/>
</dbReference>
<dbReference type="VEuPathDB" id="HostDB:ENSMUSG00000024454"/>
<dbReference type="eggNOG" id="KOG1342">
    <property type="taxonomic scope" value="Eukaryota"/>
</dbReference>
<dbReference type="GeneTree" id="ENSGT00940000160487"/>
<dbReference type="HOGENOM" id="CLU_007727_7_6_1"/>
<dbReference type="InParanoid" id="O88895"/>
<dbReference type="OMA" id="GWLRAFH"/>
<dbReference type="OrthoDB" id="1918432at2759"/>
<dbReference type="TreeFam" id="TF352182"/>
<dbReference type="BRENDA" id="3.5.1.98">
    <property type="organism ID" value="3474"/>
</dbReference>
<dbReference type="Reactome" id="R-MMU-3214815">
    <property type="pathway name" value="HDACs deacetylate histones"/>
</dbReference>
<dbReference type="Reactome" id="R-MMU-350054">
    <property type="pathway name" value="Notch-HLH transcription pathway"/>
</dbReference>
<dbReference type="Reactome" id="R-MMU-381340">
    <property type="pathway name" value="Transcriptional regulation of white adipocyte differentiation"/>
</dbReference>
<dbReference type="Reactome" id="R-MMU-400206">
    <property type="pathway name" value="Regulation of lipid metabolism by PPARalpha"/>
</dbReference>
<dbReference type="Reactome" id="R-MMU-9029569">
    <property type="pathway name" value="NR1H3 &amp; NR1H2 regulate gene expression linked to cholesterol transport and efflux"/>
</dbReference>
<dbReference type="Reactome" id="R-MMU-9701898">
    <property type="pathway name" value="STAT3 nuclear events downstream of ALK signaling"/>
</dbReference>
<dbReference type="Reactome" id="R-MMU-9707564">
    <property type="pathway name" value="Cytoprotection by HMOX1"/>
</dbReference>
<dbReference type="Reactome" id="R-MMU-9841922">
    <property type="pathway name" value="MLL4 and MLL3 complexes regulate expression of PPARG target genes in adipogenesis and hepatic steatosis"/>
</dbReference>
<dbReference type="BioGRID-ORCS" id="15183">
    <property type="hits" value="29 hits in 87 CRISPR screens"/>
</dbReference>
<dbReference type="ChiTaRS" id="Hdac3">
    <property type="organism name" value="mouse"/>
</dbReference>
<dbReference type="PRO" id="PR:O88895"/>
<dbReference type="Proteomes" id="UP000000589">
    <property type="component" value="Chromosome 18"/>
</dbReference>
<dbReference type="RNAct" id="O88895">
    <property type="molecule type" value="protein"/>
</dbReference>
<dbReference type="Bgee" id="ENSMUSG00000024454">
    <property type="expression patterns" value="Expressed in embryonic brain and 271 other cell types or tissues"/>
</dbReference>
<dbReference type="GO" id="GO:0000785">
    <property type="term" value="C:chromatin"/>
    <property type="evidence" value="ECO:0000314"/>
    <property type="project" value="MGI"/>
</dbReference>
<dbReference type="GO" id="GO:0005737">
    <property type="term" value="C:cytoplasm"/>
    <property type="evidence" value="ECO:0000314"/>
    <property type="project" value="UniProtKB"/>
</dbReference>
<dbReference type="GO" id="GO:0005829">
    <property type="term" value="C:cytosol"/>
    <property type="evidence" value="ECO:0000250"/>
    <property type="project" value="UniProtKB"/>
</dbReference>
<dbReference type="GO" id="GO:0005794">
    <property type="term" value="C:Golgi apparatus"/>
    <property type="evidence" value="ECO:0007669"/>
    <property type="project" value="Ensembl"/>
</dbReference>
<dbReference type="GO" id="GO:0000118">
    <property type="term" value="C:histone deacetylase complex"/>
    <property type="evidence" value="ECO:0000304"/>
    <property type="project" value="UniProtKB"/>
</dbReference>
<dbReference type="GO" id="GO:0072686">
    <property type="term" value="C:mitotic spindle"/>
    <property type="evidence" value="ECO:0007669"/>
    <property type="project" value="Ensembl"/>
</dbReference>
<dbReference type="GO" id="GO:0005654">
    <property type="term" value="C:nucleoplasm"/>
    <property type="evidence" value="ECO:0000304"/>
    <property type="project" value="Reactome"/>
</dbReference>
<dbReference type="GO" id="GO:0005634">
    <property type="term" value="C:nucleus"/>
    <property type="evidence" value="ECO:0000314"/>
    <property type="project" value="UniProtKB"/>
</dbReference>
<dbReference type="GO" id="GO:0005886">
    <property type="term" value="C:plasma membrane"/>
    <property type="evidence" value="ECO:0007669"/>
    <property type="project" value="Ensembl"/>
</dbReference>
<dbReference type="GO" id="GO:0017053">
    <property type="term" value="C:transcription repressor complex"/>
    <property type="evidence" value="ECO:0000250"/>
    <property type="project" value="UniProtKB"/>
</dbReference>
<dbReference type="GO" id="GO:0003682">
    <property type="term" value="F:chromatin binding"/>
    <property type="evidence" value="ECO:0000314"/>
    <property type="project" value="MGI"/>
</dbReference>
<dbReference type="GO" id="GO:0031490">
    <property type="term" value="F:chromatin DNA binding"/>
    <property type="evidence" value="ECO:0000314"/>
    <property type="project" value="MGI"/>
</dbReference>
<dbReference type="GO" id="GO:0030332">
    <property type="term" value="F:cyclin binding"/>
    <property type="evidence" value="ECO:0007669"/>
    <property type="project" value="Ensembl"/>
</dbReference>
<dbReference type="GO" id="GO:0003677">
    <property type="term" value="F:DNA binding"/>
    <property type="evidence" value="ECO:0000314"/>
    <property type="project" value="MGI"/>
</dbReference>
<dbReference type="GO" id="GO:0140297">
    <property type="term" value="F:DNA-binding transcription factor binding"/>
    <property type="evidence" value="ECO:0000304"/>
    <property type="project" value="UniProtKB"/>
</dbReference>
<dbReference type="GO" id="GO:0051020">
    <property type="term" value="F:GTPase binding"/>
    <property type="evidence" value="ECO:0007669"/>
    <property type="project" value="Ensembl"/>
</dbReference>
<dbReference type="GO" id="GO:0004407">
    <property type="term" value="F:histone deacetylase activity"/>
    <property type="evidence" value="ECO:0000314"/>
    <property type="project" value="UniProtKB"/>
</dbReference>
<dbReference type="GO" id="GO:0141221">
    <property type="term" value="F:histone deacetylase activity, hydrolytic mechanism"/>
    <property type="evidence" value="ECO:0007669"/>
    <property type="project" value="UniProtKB-EC"/>
</dbReference>
<dbReference type="GO" id="GO:0042826">
    <property type="term" value="F:histone deacetylase binding"/>
    <property type="evidence" value="ECO:0007669"/>
    <property type="project" value="Ensembl"/>
</dbReference>
<dbReference type="GO" id="GO:0160009">
    <property type="term" value="F:histone decrotonylase activity"/>
    <property type="evidence" value="ECO:0000314"/>
    <property type="project" value="UniProtKB"/>
</dbReference>
<dbReference type="GO" id="GO:0046872">
    <property type="term" value="F:metal ion binding"/>
    <property type="evidence" value="ECO:0007669"/>
    <property type="project" value="UniProtKB-KW"/>
</dbReference>
<dbReference type="GO" id="GO:0051059">
    <property type="term" value="F:NF-kappaB binding"/>
    <property type="evidence" value="ECO:0007669"/>
    <property type="project" value="Ensembl"/>
</dbReference>
<dbReference type="GO" id="GO:0160010">
    <property type="term" value="F:protein de-2-hydroxyisobutyrylase activity"/>
    <property type="evidence" value="ECO:0007669"/>
    <property type="project" value="Ensembl"/>
</dbReference>
<dbReference type="GO" id="GO:0033558">
    <property type="term" value="F:protein lysine deacetylase activity"/>
    <property type="evidence" value="ECO:0000314"/>
    <property type="project" value="MGI"/>
</dbReference>
<dbReference type="GO" id="GO:0160216">
    <property type="term" value="F:protein lysine delactylase activity"/>
    <property type="evidence" value="ECO:0000250"/>
    <property type="project" value="UniProtKB"/>
</dbReference>
<dbReference type="GO" id="GO:0003714">
    <property type="term" value="F:transcription corepressor activity"/>
    <property type="evidence" value="ECO:0000250"/>
    <property type="project" value="UniProtKB"/>
</dbReference>
<dbReference type="GO" id="GO:0001222">
    <property type="term" value="F:transcription corepressor binding"/>
    <property type="evidence" value="ECO:0007669"/>
    <property type="project" value="Ensembl"/>
</dbReference>
<dbReference type="GO" id="GO:1990381">
    <property type="term" value="F:ubiquitin-specific protease binding"/>
    <property type="evidence" value="ECO:0007669"/>
    <property type="project" value="Ensembl"/>
</dbReference>
<dbReference type="GO" id="GO:0071498">
    <property type="term" value="P:cellular response to fluid shear stress"/>
    <property type="evidence" value="ECO:0000250"/>
    <property type="project" value="UniProtKB"/>
</dbReference>
<dbReference type="GO" id="GO:0071260">
    <property type="term" value="P:cellular response to mechanical stimulus"/>
    <property type="evidence" value="ECO:0007669"/>
    <property type="project" value="Ensembl"/>
</dbReference>
<dbReference type="GO" id="GO:0071374">
    <property type="term" value="P:cellular response to parathyroid hormone stimulus"/>
    <property type="evidence" value="ECO:0007669"/>
    <property type="project" value="Ensembl"/>
</dbReference>
<dbReference type="GO" id="GO:0006325">
    <property type="term" value="P:chromatin organization"/>
    <property type="evidence" value="ECO:0000304"/>
    <property type="project" value="UniProtKB"/>
</dbReference>
<dbReference type="GO" id="GO:0032922">
    <property type="term" value="P:circadian regulation of gene expression"/>
    <property type="evidence" value="ECO:0000315"/>
    <property type="project" value="UniProtKB"/>
</dbReference>
<dbReference type="GO" id="GO:1903575">
    <property type="term" value="P:cornified envelope assembly"/>
    <property type="evidence" value="ECO:0000315"/>
    <property type="project" value="MGI"/>
</dbReference>
<dbReference type="GO" id="GO:0140861">
    <property type="term" value="P:DNA repair-dependent chromatin remodeling"/>
    <property type="evidence" value="ECO:0007669"/>
    <property type="project" value="Ensembl"/>
</dbReference>
<dbReference type="GO" id="GO:0008544">
    <property type="term" value="P:epidermis development"/>
    <property type="evidence" value="ECO:0000315"/>
    <property type="project" value="MGI"/>
</dbReference>
<dbReference type="GO" id="GO:0000132">
    <property type="term" value="P:establishment of mitotic spindle orientation"/>
    <property type="evidence" value="ECO:0007669"/>
    <property type="project" value="Ensembl"/>
</dbReference>
<dbReference type="GO" id="GO:0061436">
    <property type="term" value="P:establishment of skin barrier"/>
    <property type="evidence" value="ECO:0000315"/>
    <property type="project" value="MGI"/>
</dbReference>
<dbReference type="GO" id="GO:0010467">
    <property type="term" value="P:gene expression"/>
    <property type="evidence" value="ECO:0000315"/>
    <property type="project" value="MGI"/>
</dbReference>
<dbReference type="GO" id="GO:0001701">
    <property type="term" value="P:in utero embryonic development"/>
    <property type="evidence" value="ECO:0000315"/>
    <property type="project" value="MGI"/>
</dbReference>
<dbReference type="GO" id="GO:2000726">
    <property type="term" value="P:negative regulation of cardiac muscle cell differentiation"/>
    <property type="evidence" value="ECO:0000315"/>
    <property type="project" value="MGI"/>
</dbReference>
<dbReference type="GO" id="GO:0032692">
    <property type="term" value="P:negative regulation of interleukin-1 production"/>
    <property type="evidence" value="ECO:0007669"/>
    <property type="project" value="Ensembl"/>
</dbReference>
<dbReference type="GO" id="GO:0046329">
    <property type="term" value="P:negative regulation of JNK cascade"/>
    <property type="evidence" value="ECO:0007669"/>
    <property type="project" value="Ensembl"/>
</dbReference>
<dbReference type="GO" id="GO:0046826">
    <property type="term" value="P:negative regulation of protein export from nucleus"/>
    <property type="evidence" value="ECO:0007669"/>
    <property type="project" value="Ensembl"/>
</dbReference>
<dbReference type="GO" id="GO:0000122">
    <property type="term" value="P:negative regulation of transcription by RNA polymerase II"/>
    <property type="evidence" value="ECO:0000316"/>
    <property type="project" value="MGI"/>
</dbReference>
<dbReference type="GO" id="GO:0032720">
    <property type="term" value="P:negative regulation of tumor necrosis factor production"/>
    <property type="evidence" value="ECO:0007669"/>
    <property type="project" value="Ensembl"/>
</dbReference>
<dbReference type="GO" id="GO:0061351">
    <property type="term" value="P:neural precursor cell proliferation"/>
    <property type="evidence" value="ECO:0000314"/>
    <property type="project" value="MGI"/>
</dbReference>
<dbReference type="GO" id="GO:0120162">
    <property type="term" value="P:positive regulation of cold-induced thermogenesis"/>
    <property type="evidence" value="ECO:0000315"/>
    <property type="project" value="YuBioLab"/>
</dbReference>
<dbReference type="GO" id="GO:0043525">
    <property type="term" value="P:positive regulation of neuron apoptotic process"/>
    <property type="evidence" value="ECO:0007669"/>
    <property type="project" value="Ensembl"/>
</dbReference>
<dbReference type="GO" id="GO:0042307">
    <property type="term" value="P:positive regulation of protein import into nucleus"/>
    <property type="evidence" value="ECO:0000250"/>
    <property type="project" value="UniProtKB"/>
</dbReference>
<dbReference type="GO" id="GO:0001934">
    <property type="term" value="P:positive regulation of protein phosphorylation"/>
    <property type="evidence" value="ECO:0000250"/>
    <property type="project" value="UniProtKB"/>
</dbReference>
<dbReference type="GO" id="GO:0031398">
    <property type="term" value="P:positive regulation of protein ubiquitination"/>
    <property type="evidence" value="ECO:0000315"/>
    <property type="project" value="UniProtKB"/>
</dbReference>
<dbReference type="GO" id="GO:0032008">
    <property type="term" value="P:positive regulation of TOR signaling"/>
    <property type="evidence" value="ECO:0000250"/>
    <property type="project" value="UniProtKB"/>
</dbReference>
<dbReference type="GO" id="GO:0045944">
    <property type="term" value="P:positive regulation of transcription by RNA polymerase II"/>
    <property type="evidence" value="ECO:0000250"/>
    <property type="project" value="UniProtKB"/>
</dbReference>
<dbReference type="GO" id="GO:2000676">
    <property type="term" value="P:positive regulation of type B pancreatic cell apoptotic process"/>
    <property type="evidence" value="ECO:0007669"/>
    <property type="project" value="Ensembl"/>
</dbReference>
<dbReference type="GO" id="GO:0036211">
    <property type="term" value="P:protein modification process"/>
    <property type="evidence" value="ECO:0007669"/>
    <property type="project" value="Ensembl"/>
</dbReference>
<dbReference type="GO" id="GO:0060816">
    <property type="term" value="P:random inactivation of X chromosome"/>
    <property type="evidence" value="ECO:0000315"/>
    <property type="project" value="FlyBase"/>
</dbReference>
<dbReference type="GO" id="GO:0042752">
    <property type="term" value="P:regulation of circadian rhythm"/>
    <property type="evidence" value="ECO:0000315"/>
    <property type="project" value="UniProtKB"/>
</dbReference>
<dbReference type="GO" id="GO:0007346">
    <property type="term" value="P:regulation of mitotic cell cycle"/>
    <property type="evidence" value="ECO:0000314"/>
    <property type="project" value="MGI"/>
</dbReference>
<dbReference type="GO" id="GO:0040014">
    <property type="term" value="P:regulation of multicellular organism growth"/>
    <property type="evidence" value="ECO:0000316"/>
    <property type="project" value="MGI"/>
</dbReference>
<dbReference type="GO" id="GO:0031647">
    <property type="term" value="P:regulation of protein stability"/>
    <property type="evidence" value="ECO:0000250"/>
    <property type="project" value="UniProtKB"/>
</dbReference>
<dbReference type="GO" id="GO:0071548">
    <property type="term" value="P:response to dexamethasone"/>
    <property type="evidence" value="ECO:0007669"/>
    <property type="project" value="Ensembl"/>
</dbReference>
<dbReference type="GO" id="GO:0031667">
    <property type="term" value="P:response to nutrient levels"/>
    <property type="evidence" value="ECO:0007669"/>
    <property type="project" value="Ensembl"/>
</dbReference>
<dbReference type="GO" id="GO:0009410">
    <property type="term" value="P:response to xenobiotic stimulus"/>
    <property type="evidence" value="ECO:0007669"/>
    <property type="project" value="Ensembl"/>
</dbReference>
<dbReference type="GO" id="GO:0051225">
    <property type="term" value="P:spindle assembly"/>
    <property type="evidence" value="ECO:0007669"/>
    <property type="project" value="Ensembl"/>
</dbReference>
<dbReference type="GO" id="GO:0006366">
    <property type="term" value="P:transcription by RNA polymerase II"/>
    <property type="evidence" value="ECO:0000316"/>
    <property type="project" value="MGI"/>
</dbReference>
<dbReference type="CDD" id="cd10005">
    <property type="entry name" value="HDAC3"/>
    <property type="match status" value="1"/>
</dbReference>
<dbReference type="FunFam" id="3.40.800.20:FF:000004">
    <property type="entry name" value="Histone deacetylase"/>
    <property type="match status" value="1"/>
</dbReference>
<dbReference type="Gene3D" id="3.40.800.20">
    <property type="entry name" value="Histone deacetylase domain"/>
    <property type="match status" value="1"/>
</dbReference>
<dbReference type="InterPro" id="IPR050284">
    <property type="entry name" value="HDAC_PDAC"/>
</dbReference>
<dbReference type="InterPro" id="IPR000286">
    <property type="entry name" value="His_deacetylse"/>
</dbReference>
<dbReference type="InterPro" id="IPR003084">
    <property type="entry name" value="His_deacetylse_1"/>
</dbReference>
<dbReference type="InterPro" id="IPR023801">
    <property type="entry name" value="His_deacetylse_dom"/>
</dbReference>
<dbReference type="InterPro" id="IPR037138">
    <property type="entry name" value="His_deacetylse_dom_sf"/>
</dbReference>
<dbReference type="InterPro" id="IPR023696">
    <property type="entry name" value="Ureohydrolase_dom_sf"/>
</dbReference>
<dbReference type="PANTHER" id="PTHR10625:SF36">
    <property type="entry name" value="HISTONE DEACETYLASE 3"/>
    <property type="match status" value="1"/>
</dbReference>
<dbReference type="PANTHER" id="PTHR10625">
    <property type="entry name" value="HISTONE DEACETYLASE HDAC1-RELATED"/>
    <property type="match status" value="1"/>
</dbReference>
<dbReference type="Pfam" id="PF00850">
    <property type="entry name" value="Hist_deacetyl"/>
    <property type="match status" value="1"/>
</dbReference>
<dbReference type="PIRSF" id="PIRSF037913">
    <property type="entry name" value="His_deacetylse_1"/>
    <property type="match status" value="1"/>
</dbReference>
<dbReference type="PRINTS" id="PR01270">
    <property type="entry name" value="HDASUPER"/>
</dbReference>
<dbReference type="PRINTS" id="PR01271">
    <property type="entry name" value="HISDACETLASE"/>
</dbReference>
<dbReference type="SUPFAM" id="SSF52768">
    <property type="entry name" value="Arginase/deacetylase"/>
    <property type="match status" value="1"/>
</dbReference>
<comment type="function">
    <text evidence="1 12 13 15 17 18">Histone deacetylase that catalyzes the deacetylation of lysine residues on the N-terminal part of the core histones (H2A, H2B, H3 and H4), and some other non-histone substrates (PubMed:23911289, PubMed:30279482). Histone deacetylation gives a tag for epigenetic repression and plays an important role in transcriptional regulation, cell cycle progression and developmental events (PubMed:23911289). Histone deacetylases act via the formation of large multiprotein complexes, such as N-Cor repressor complex, which activate the histone deacetylase activity (PubMed:23911289). Participates in the BCL6 transcriptional repressor activity by deacetylating the H3 'Lys-27' (H3K27) on enhancer elements, antagonizing EP300 acetyltransferase activity and repressing proximal gene expression (PubMed:23911289). Acts as a molecular chaperone for shuttling phosphorylated NR2C1 to PML bodies for sumoylation (PubMed:19204783). Contributes, together with XBP1 isoform 1, to the activation of NFE2L2-mediated HMOX1 transcription factor gene expression in a PI(3)K/mTORC2/Akt-dependent signaling pathway leading to endothelial cell (EC) survival under disturbed flow/oxidative stress (By similarity). Regulates both the transcriptional activation and repression phases of the circadian clock in a deacetylase activity-independent manner (PubMed:26776516). During the activation phase, promotes the accumulation of ubiquitinated BMAL1 at the E-boxes and during the repression phase, blocks FBXL3-mediated CRY1/2 ubiquitination and promotes the interaction of CRY1 and BMAL1 (PubMed:26776516). The NCOR1-HDAC3 complex regulates the circadian expression of the core clock gene BMAL1 and the genes involved in lipid metabolism in the liver (PubMed:19037247). Also functions as deacetylase for non-histone targets, such as KAT5, MEF2D, MAPK14, RARA and STAT3 (By similarity). Serves as a corepressor of RARA, mediating its deacetylation and repression, leading to inhibition of RARE DNA element binding (By similarity). In addition to protein deacetylase activity, also acts as a protein-lysine deacylase by recognizing other acyl groups: catalyzes removal of (2E)-butenoyl (crotonyl), lactoyl (lactyl) and 2-hydroxyisobutanoyl (2-hydroxyisobutyryl) acyl groups from lysine residues, leading to protein decrotonylation, delactylation and de-2-hydroxyisobutyrylation, respectively (PubMed:30279482). Catalyzes decrotonylation of MAPRE1/EB1 (By similarity). Mediates delactylation NBN/NBS1, thereby inhibiting DNA double-strand breaks (DSBs) via homologous recombination (HR) (By similarity).</text>
</comment>
<comment type="catalytic activity">
    <reaction evidence="22 23">
        <text>N(6)-acetyl-L-lysyl-[histone] + H2O = L-lysyl-[histone] + acetate</text>
        <dbReference type="Rhea" id="RHEA:58196"/>
        <dbReference type="Rhea" id="RHEA-COMP:9845"/>
        <dbReference type="Rhea" id="RHEA-COMP:11338"/>
        <dbReference type="ChEBI" id="CHEBI:15377"/>
        <dbReference type="ChEBI" id="CHEBI:29969"/>
        <dbReference type="ChEBI" id="CHEBI:30089"/>
        <dbReference type="ChEBI" id="CHEBI:61930"/>
        <dbReference type="EC" id="3.5.1.98"/>
    </reaction>
    <physiologicalReaction direction="left-to-right" evidence="22 23">
        <dbReference type="Rhea" id="RHEA:58197"/>
    </physiologicalReaction>
</comment>
<comment type="catalytic activity">
    <reaction evidence="1">
        <text>N(6)-acetyl-L-lysyl-[protein] + H2O = L-lysyl-[protein] + acetate</text>
        <dbReference type="Rhea" id="RHEA:58108"/>
        <dbReference type="Rhea" id="RHEA-COMP:9752"/>
        <dbReference type="Rhea" id="RHEA-COMP:10731"/>
        <dbReference type="ChEBI" id="CHEBI:15377"/>
        <dbReference type="ChEBI" id="CHEBI:29969"/>
        <dbReference type="ChEBI" id="CHEBI:30089"/>
        <dbReference type="ChEBI" id="CHEBI:61930"/>
    </reaction>
    <physiologicalReaction direction="left-to-right" evidence="1">
        <dbReference type="Rhea" id="RHEA:58109"/>
    </physiologicalReaction>
</comment>
<comment type="catalytic activity">
    <reaction evidence="18">
        <text>N(6)-(2E)-butenoyl-L-lysyl-[protein] + H2O = (2E)-2-butenoate + L-lysyl-[protein]</text>
        <dbReference type="Rhea" id="RHEA:69172"/>
        <dbReference type="Rhea" id="RHEA-COMP:9752"/>
        <dbReference type="Rhea" id="RHEA-COMP:13707"/>
        <dbReference type="ChEBI" id="CHEBI:15377"/>
        <dbReference type="ChEBI" id="CHEBI:29969"/>
        <dbReference type="ChEBI" id="CHEBI:35899"/>
        <dbReference type="ChEBI" id="CHEBI:137954"/>
    </reaction>
    <physiologicalReaction direction="left-to-right" evidence="18">
        <dbReference type="Rhea" id="RHEA:69173"/>
    </physiologicalReaction>
</comment>
<comment type="catalytic activity">
    <reaction evidence="1">
        <text>N(6)-(2-hydroxyisobutanoyl)-L-lysyl-[protein] + H2O = 2-hydroxy-2-methylpropanoate + L-lysyl-[protein]</text>
        <dbReference type="Rhea" id="RHEA:69176"/>
        <dbReference type="Rhea" id="RHEA-COMP:9752"/>
        <dbReference type="Rhea" id="RHEA-COMP:15921"/>
        <dbReference type="ChEBI" id="CHEBI:15377"/>
        <dbReference type="ChEBI" id="CHEBI:19641"/>
        <dbReference type="ChEBI" id="CHEBI:29969"/>
        <dbReference type="ChEBI" id="CHEBI:144968"/>
    </reaction>
    <physiologicalReaction direction="left-to-right" evidence="1">
        <dbReference type="Rhea" id="RHEA:69177"/>
    </physiologicalReaction>
</comment>
<comment type="catalytic activity">
    <reaction evidence="1">
        <text>N(6)-[(S)-lactoyl]-L-lysyl-[protein] + H2O = (S)-lactate + L-lysyl-[protein]</text>
        <dbReference type="Rhea" id="RHEA:81387"/>
        <dbReference type="Rhea" id="RHEA-COMP:9752"/>
        <dbReference type="Rhea" id="RHEA-COMP:19466"/>
        <dbReference type="ChEBI" id="CHEBI:15377"/>
        <dbReference type="ChEBI" id="CHEBI:16651"/>
        <dbReference type="ChEBI" id="CHEBI:29969"/>
        <dbReference type="ChEBI" id="CHEBI:231527"/>
    </reaction>
    <physiologicalReaction direction="left-to-right" evidence="1">
        <dbReference type="Rhea" id="RHEA:81388"/>
    </physiologicalReaction>
</comment>
<comment type="activity regulation">
    <text evidence="1">Inositol tetraphosphate (1D-myo-inositol 1,4,5,6-tetrakisphosphate) promotes the histone deacetylase activity by acting as an intermolecular glue between HDAC3 and NCOR2, thereby promoting its association with the N-Cor complex, a prerequisite for the histone deacetylase activity.</text>
</comment>
<comment type="subunit">
    <text evidence="1 3 5 6 7 8 9 10 11 12 13 14 16 17 19">Interacts with HDAC7 and HDAC9 (PubMed:10984530, PubMed:11022042, PubMed:15711539). Interacts with DAXX, KDM4A, HDAC10 and DACH1 (PubMed:12130660). Found in a complex with NCOR1 and NCOR2 (By similarity). Component of the N-Cor repressor complex, at least composed of NCOR1, NCOR2, HDAC3, TBL1X, TBL1R, CORO2A and GPS2 (By similarity). Interacts with BCOR, MJD2A/JHDM3A, NRIP1, PRDM6 and SRY (PubMed:16537907). Interacts with BTBD14B (By similarity). Interacts with GLIS2 (PubMed:16326862). Interacts (via the DNA-binding domain) with NR2C1; the interaction recruits phosphorylated NR2C1 to PML bodies for sumoylation (PubMed:19204783). Component of the Notch corepressor complex (By similarity). Interacts with CBFA2T3 and NKAP (PubMed:11533236). Interacts with APEX1; the interaction is not dependent on the acetylated status of APEX1 (By similarity). Interacts with ZMYND15 (PubMed:20675388). Interacts with SMRT/NCOR2 and BCL6 on DNA enhancer elements (By similarity). Interacts with INSM1 (By similarity). Interacts with XBP1 isoform 1; the interaction occurs in endothelial cell (EC) under disturbed flow (By similarity). Interacts (via C-terminus) with CCAR2 (via N-terminus) (By similarity). Interacts with and deacetylates MEF2D (By similarity). Interacts with BEND3 (By similarity). Interacts with NKAPL (PubMed:25875095). Interacts with DHX36; this interaction occurs in a RNA-dependent manner (By similarity). Interacts weakly with CRY1; this interaction is enhanced in the presence of FBXL3 (PubMed:26776516). Interacts with FBXL3 and BMAL1 (PubMed:26776516). Interacts with NCOR1 (PubMed:19037247). Interacts with RARA (By similarity). Interacts with SETD5 (PubMed:30455454).</text>
</comment>
<comment type="interaction">
    <interactant intactId="EBI-302263">
        <id>O88895</id>
    </interactant>
    <interactant intactId="EBI-1188816">
        <id>Q9Z2D6</id>
        <label>Mecp2</label>
    </interactant>
    <organismsDiffer>false</organismsDiffer>
    <experiments>5</experiments>
</comment>
<comment type="interaction">
    <interactant intactId="EBI-302263">
        <id>O88895</id>
    </interactant>
    <interactant intactId="EBI-644427">
        <id>Q9Z1E3</id>
        <label>Nfkbia</label>
    </interactant>
    <organismsDiffer>false</organismsDiffer>
    <experiments>2</experiments>
</comment>
<comment type="interaction">
    <interactant intactId="EBI-302263">
        <id>O88895</id>
    </interactant>
    <interactant intactId="EBI-15658561">
        <id>Q64104</id>
        <label>Nr2e1</label>
    </interactant>
    <organismsDiffer>false</organismsDiffer>
    <experiments>2</experiments>
</comment>
<comment type="interaction">
    <interactant intactId="EBI-302263">
        <id>O88895</id>
    </interactant>
    <interactant intactId="EBI-1210244">
        <id>Q3TKT4</id>
        <label>Smarca4</label>
    </interactant>
    <organismsDiffer>false</organismsDiffer>
    <experiments>2</experiments>
</comment>
<comment type="subcellular location">
    <subcellularLocation>
        <location evidence="17">Nucleus</location>
    </subcellularLocation>
    <subcellularLocation>
        <location evidence="1">Chromosome</location>
    </subcellularLocation>
    <subcellularLocation>
        <location evidence="17">Cytoplasm</location>
    </subcellularLocation>
    <subcellularLocation>
        <location evidence="1">Cytoplasm</location>
        <location evidence="1">Cytosol</location>
    </subcellularLocation>
    <text evidence="1">Colocalizes with XBP1 and AKT1 in the cytoplasm. Predominantly expressed in the nucleus in the presence of CCAR2.</text>
</comment>
<comment type="alternative products">
    <event type="alternative splicing"/>
    <isoform>
        <id>O88895-1</id>
        <name>Long</name>
        <sequence type="displayed"/>
    </isoform>
    <isoform>
        <id>O88895-2</id>
        <name>Short</name>
        <sequence type="described" ref="VSP_002080"/>
    </isoform>
</comment>
<comment type="PTM">
    <text evidence="13">Sumoylated in vitro.</text>
</comment>
<comment type="PTM">
    <text evidence="1">Deubiquitinated on 'Lys-63'-linked ubiquitin chains by USP38; leading to a decreased level of histone acetylation.</text>
</comment>
<comment type="disruption phenotype">
    <text evidence="17">Liver-specific knockout mice exhibit low amplitude of circadian rhythms, dampened E-box-driven transcription and a significant reduction in the protein levels of BMAL1 and CRY1 in the liver.</text>
</comment>
<comment type="similarity">
    <text evidence="21">Belongs to the histone deacetylase family. HD type 1 subfamily.</text>
</comment>
<comment type="sequence caution" evidence="21">
    <conflict type="erroneous termination">
        <sequence resource="EMBL-CDS" id="AAC36305"/>
    </conflict>
    <text>Truncated C-terminus.</text>
</comment>
<comment type="sequence caution" evidence="21">
    <conflict type="erroneous termination">
        <sequence resource="EMBL-CDS" id="AAC36306"/>
    </conflict>
    <text>Truncated C-terminus.</text>
</comment>
<comment type="sequence caution" evidence="21">
    <conflict type="erroneous termination">
        <sequence resource="EMBL-CDS" id="AAC67258"/>
    </conflict>
    <text>Truncated C-terminus.</text>
</comment>
<organism>
    <name type="scientific">Mus musculus</name>
    <name type="common">Mouse</name>
    <dbReference type="NCBI Taxonomy" id="10090"/>
    <lineage>
        <taxon>Eukaryota</taxon>
        <taxon>Metazoa</taxon>
        <taxon>Chordata</taxon>
        <taxon>Craniata</taxon>
        <taxon>Vertebrata</taxon>
        <taxon>Euteleostomi</taxon>
        <taxon>Mammalia</taxon>
        <taxon>Eutheria</taxon>
        <taxon>Euarchontoglires</taxon>
        <taxon>Glires</taxon>
        <taxon>Rodentia</taxon>
        <taxon>Myomorpha</taxon>
        <taxon>Muroidea</taxon>
        <taxon>Muridae</taxon>
        <taxon>Murinae</taxon>
        <taxon>Mus</taxon>
        <taxon>Mus</taxon>
    </lineage>
</organism>
<evidence type="ECO:0000250" key="1">
    <source>
        <dbReference type="UniProtKB" id="O15379"/>
    </source>
</evidence>
<evidence type="ECO:0000250" key="2">
    <source>
        <dbReference type="UniProtKB" id="Q13547"/>
    </source>
</evidence>
<evidence type="ECO:0000250" key="3">
    <source>
        <dbReference type="UniProtKB" id="Q6P6W3"/>
    </source>
</evidence>
<evidence type="ECO:0000256" key="4">
    <source>
        <dbReference type="SAM" id="MobiDB-lite"/>
    </source>
</evidence>
<evidence type="ECO:0000269" key="5">
    <source>
    </source>
</evidence>
<evidence type="ECO:0000269" key="6">
    <source>
    </source>
</evidence>
<evidence type="ECO:0000269" key="7">
    <source>
    </source>
</evidence>
<evidence type="ECO:0000269" key="8">
    <source>
    </source>
</evidence>
<evidence type="ECO:0000269" key="9">
    <source>
    </source>
</evidence>
<evidence type="ECO:0000269" key="10">
    <source>
    </source>
</evidence>
<evidence type="ECO:0000269" key="11">
    <source>
    </source>
</evidence>
<evidence type="ECO:0000269" key="12">
    <source>
    </source>
</evidence>
<evidence type="ECO:0000269" key="13">
    <source>
    </source>
</evidence>
<evidence type="ECO:0000269" key="14">
    <source>
    </source>
</evidence>
<evidence type="ECO:0000269" key="15">
    <source>
    </source>
</evidence>
<evidence type="ECO:0000269" key="16">
    <source>
    </source>
</evidence>
<evidence type="ECO:0000269" key="17">
    <source>
    </source>
</evidence>
<evidence type="ECO:0000269" key="18">
    <source>
    </source>
</evidence>
<evidence type="ECO:0000269" key="19">
    <source>
    </source>
</evidence>
<evidence type="ECO:0000303" key="20">
    <source>
    </source>
</evidence>
<evidence type="ECO:0000305" key="21"/>
<evidence type="ECO:0000305" key="22">
    <source>
    </source>
</evidence>
<evidence type="ECO:0000305" key="23">
    <source>
    </source>
</evidence>
<evidence type="ECO:0000312" key="24">
    <source>
        <dbReference type="MGI" id="MGI:1343091"/>
    </source>
</evidence>
<sequence length="428" mass="48821">MAKTVAYFYDPDVGNFHYGAGHPMKPHRLALTHSLVLHYGLYKKMIVFKPYQASQHDMCRFHSEDYIDFLQRVSPTNMQGFTKSLNAFNVGDDCPVFPGLFEFCSRYTGASLQGATQLNNKICDIAINWAGGLHHAKKFEASGFCYVNDIVIGILELLKYHPRVLYIDIDIHHGDGVQEAFYLTDRVMTVSFHKYGNYFFPGTGDMYEVGAESGRYYCLNVPLRDGIDDQSYKHLFQPVISQVVDFYQPTCIVLQCGADSLGCDRLGCFNLSIRGHGECVEYVKSFNIPLLVLGGGGYTVRNVARCWTYETSLLVEEAISEELPYSEYFEYFAPDFTLHPDVSTRIENQNSRQYLDQIRQTIFENLKMLNHAPSVQIHDVPADLLTYDRTDEADAEERGPEENYSRPEAPNEFYDGDHDNDKESDVEI</sequence>
<name>HDAC3_MOUSE</name>